<organism>
    <name type="scientific">Magnetococcus marinus (strain ATCC BAA-1437 / JCM 17883 / MC-1)</name>
    <dbReference type="NCBI Taxonomy" id="156889"/>
    <lineage>
        <taxon>Bacteria</taxon>
        <taxon>Pseudomonadati</taxon>
        <taxon>Pseudomonadota</taxon>
        <taxon>Alphaproteobacteria</taxon>
        <taxon>Magnetococcales</taxon>
        <taxon>Magnetococcaceae</taxon>
        <taxon>Magnetococcus</taxon>
    </lineage>
</organism>
<name>CH60_MAGMM</name>
<dbReference type="EC" id="5.6.1.7" evidence="1"/>
<dbReference type="EMBL" id="CP000471">
    <property type="protein sequence ID" value="ABK42822.1"/>
    <property type="molecule type" value="Genomic_DNA"/>
</dbReference>
<dbReference type="RefSeq" id="WP_011711994.1">
    <property type="nucleotide sequence ID" value="NC_008576.1"/>
</dbReference>
<dbReference type="SMR" id="A0L4C9"/>
<dbReference type="STRING" id="156889.Mmc1_0295"/>
<dbReference type="KEGG" id="mgm:Mmc1_0295"/>
<dbReference type="eggNOG" id="COG0459">
    <property type="taxonomic scope" value="Bacteria"/>
</dbReference>
<dbReference type="HOGENOM" id="CLU_016503_3_0_5"/>
<dbReference type="OrthoDB" id="9766614at2"/>
<dbReference type="Proteomes" id="UP000002586">
    <property type="component" value="Chromosome"/>
</dbReference>
<dbReference type="GO" id="GO:0005737">
    <property type="term" value="C:cytoplasm"/>
    <property type="evidence" value="ECO:0007669"/>
    <property type="project" value="UniProtKB-SubCell"/>
</dbReference>
<dbReference type="GO" id="GO:0005524">
    <property type="term" value="F:ATP binding"/>
    <property type="evidence" value="ECO:0007669"/>
    <property type="project" value="UniProtKB-UniRule"/>
</dbReference>
<dbReference type="GO" id="GO:0140662">
    <property type="term" value="F:ATP-dependent protein folding chaperone"/>
    <property type="evidence" value="ECO:0007669"/>
    <property type="project" value="InterPro"/>
</dbReference>
<dbReference type="GO" id="GO:0016853">
    <property type="term" value="F:isomerase activity"/>
    <property type="evidence" value="ECO:0007669"/>
    <property type="project" value="UniProtKB-KW"/>
</dbReference>
<dbReference type="GO" id="GO:0051082">
    <property type="term" value="F:unfolded protein binding"/>
    <property type="evidence" value="ECO:0007669"/>
    <property type="project" value="UniProtKB-UniRule"/>
</dbReference>
<dbReference type="GO" id="GO:0042026">
    <property type="term" value="P:protein refolding"/>
    <property type="evidence" value="ECO:0007669"/>
    <property type="project" value="UniProtKB-UniRule"/>
</dbReference>
<dbReference type="CDD" id="cd03344">
    <property type="entry name" value="GroEL"/>
    <property type="match status" value="1"/>
</dbReference>
<dbReference type="FunFam" id="1.10.560.10:FF:000001">
    <property type="entry name" value="60 kDa chaperonin"/>
    <property type="match status" value="1"/>
</dbReference>
<dbReference type="FunFam" id="3.50.7.10:FF:000001">
    <property type="entry name" value="60 kDa chaperonin"/>
    <property type="match status" value="1"/>
</dbReference>
<dbReference type="Gene3D" id="3.50.7.10">
    <property type="entry name" value="GroEL"/>
    <property type="match status" value="1"/>
</dbReference>
<dbReference type="Gene3D" id="1.10.560.10">
    <property type="entry name" value="GroEL-like equatorial domain"/>
    <property type="match status" value="1"/>
</dbReference>
<dbReference type="Gene3D" id="3.30.260.10">
    <property type="entry name" value="TCP-1-like chaperonin intermediate domain"/>
    <property type="match status" value="1"/>
</dbReference>
<dbReference type="HAMAP" id="MF_00600">
    <property type="entry name" value="CH60"/>
    <property type="match status" value="1"/>
</dbReference>
<dbReference type="InterPro" id="IPR018370">
    <property type="entry name" value="Chaperonin_Cpn60_CS"/>
</dbReference>
<dbReference type="InterPro" id="IPR001844">
    <property type="entry name" value="Cpn60/GroEL"/>
</dbReference>
<dbReference type="InterPro" id="IPR002423">
    <property type="entry name" value="Cpn60/GroEL/TCP-1"/>
</dbReference>
<dbReference type="InterPro" id="IPR027409">
    <property type="entry name" value="GroEL-like_apical_dom_sf"/>
</dbReference>
<dbReference type="InterPro" id="IPR027413">
    <property type="entry name" value="GROEL-like_equatorial_sf"/>
</dbReference>
<dbReference type="InterPro" id="IPR027410">
    <property type="entry name" value="TCP-1-like_intermed_sf"/>
</dbReference>
<dbReference type="NCBIfam" id="TIGR02348">
    <property type="entry name" value="GroEL"/>
    <property type="match status" value="1"/>
</dbReference>
<dbReference type="NCBIfam" id="NF000592">
    <property type="entry name" value="PRK00013.1"/>
    <property type="match status" value="1"/>
</dbReference>
<dbReference type="NCBIfam" id="NF009487">
    <property type="entry name" value="PRK12849.1"/>
    <property type="match status" value="1"/>
</dbReference>
<dbReference type="NCBIfam" id="NF009488">
    <property type="entry name" value="PRK12850.1"/>
    <property type="match status" value="1"/>
</dbReference>
<dbReference type="NCBIfam" id="NF009489">
    <property type="entry name" value="PRK12851.1"/>
    <property type="match status" value="1"/>
</dbReference>
<dbReference type="PANTHER" id="PTHR45633">
    <property type="entry name" value="60 KDA HEAT SHOCK PROTEIN, MITOCHONDRIAL"/>
    <property type="match status" value="1"/>
</dbReference>
<dbReference type="Pfam" id="PF00118">
    <property type="entry name" value="Cpn60_TCP1"/>
    <property type="match status" value="1"/>
</dbReference>
<dbReference type="PRINTS" id="PR00298">
    <property type="entry name" value="CHAPERONIN60"/>
</dbReference>
<dbReference type="SUPFAM" id="SSF52029">
    <property type="entry name" value="GroEL apical domain-like"/>
    <property type="match status" value="1"/>
</dbReference>
<dbReference type="SUPFAM" id="SSF48592">
    <property type="entry name" value="GroEL equatorial domain-like"/>
    <property type="match status" value="1"/>
</dbReference>
<dbReference type="SUPFAM" id="SSF54849">
    <property type="entry name" value="GroEL-intermediate domain like"/>
    <property type="match status" value="1"/>
</dbReference>
<dbReference type="PROSITE" id="PS00296">
    <property type="entry name" value="CHAPERONINS_CPN60"/>
    <property type="match status" value="1"/>
</dbReference>
<reference key="1">
    <citation type="journal article" date="2009" name="Appl. Environ. Microbiol.">
        <title>Complete genome sequence of the chemolithoautotrophic marine magnetotactic coccus strain MC-1.</title>
        <authorList>
            <person name="Schubbe S."/>
            <person name="Williams T.J."/>
            <person name="Xie G."/>
            <person name="Kiss H.E."/>
            <person name="Brettin T.S."/>
            <person name="Martinez D."/>
            <person name="Ross C.A."/>
            <person name="Schuler D."/>
            <person name="Cox B.L."/>
            <person name="Nealson K.H."/>
            <person name="Bazylinski D.A."/>
        </authorList>
    </citation>
    <scope>NUCLEOTIDE SEQUENCE [LARGE SCALE GENOMIC DNA]</scope>
    <source>
        <strain>ATCC BAA-1437 / JCM 17883 / MC-1</strain>
    </source>
</reference>
<sequence length="551" mass="57938">MAAKEVKFGEAARAKMLNGVNILANAVKVTLGPKGRNVVLDKSWGAPRMTKDGVSVAKEIELEDKFENMGAQMVREVSSKTADVAGDGTTTATVLAQAIIREGMKAVAAGMNPMDLKRGIDLAVEAVVVGLKGISREVANSQEIAQVGAISANSDKVVGDMIAEAMDKVGKEGVITVEEAKGLETTLDVVEGMQFDRGYLSPYFVTNADKMLVQMENPLILLVEKKISNLQQILQILEGAVQSSRPLMIIAEDVEGEALATLVVNKLRGGLKVCAVKAPGFGDRRKAMMEDIATLTGGVLVSEDVGVKLENVTMDMLGMAKSIVVTKEDTTIIDGAGDHEAIKARVNQIRAQIEETSSDYDREKLQERLAKLAGGVAVIKVGGATEVEVKERKDRVDDALHATRAAVEEGIVPGGGVALLRAREASLTNLQGANHDQQVGINIVTRALEEPLRIIASNAGAEGSVVVNRVVETKETNFGFNAATGVYEDLVASGVIDPAKVVRHALQAAASVAGLMITTEAMVAELPKDEPAMPGGDMGGMGGMGGMGGMM</sequence>
<proteinExistence type="inferred from homology"/>
<comment type="function">
    <text evidence="1">Together with its co-chaperonin GroES, plays an essential role in assisting protein folding. The GroEL-GroES system forms a nano-cage that allows encapsulation of the non-native substrate proteins and provides a physical environment optimized to promote and accelerate protein folding.</text>
</comment>
<comment type="catalytic activity">
    <reaction evidence="1">
        <text>ATP + H2O + a folded polypeptide = ADP + phosphate + an unfolded polypeptide.</text>
        <dbReference type="EC" id="5.6.1.7"/>
    </reaction>
</comment>
<comment type="subunit">
    <text evidence="1">Forms a cylinder of 14 subunits composed of two heptameric rings stacked back-to-back. Interacts with the co-chaperonin GroES.</text>
</comment>
<comment type="subcellular location">
    <subcellularLocation>
        <location evidence="1">Cytoplasm</location>
    </subcellularLocation>
</comment>
<comment type="similarity">
    <text evidence="1">Belongs to the chaperonin (HSP60) family.</text>
</comment>
<keyword id="KW-0067">ATP-binding</keyword>
<keyword id="KW-0143">Chaperone</keyword>
<keyword id="KW-0963">Cytoplasm</keyword>
<keyword id="KW-0413">Isomerase</keyword>
<keyword id="KW-0547">Nucleotide-binding</keyword>
<keyword id="KW-1185">Reference proteome</keyword>
<feature type="chain" id="PRO_1000061258" description="Chaperonin GroEL">
    <location>
        <begin position="1"/>
        <end position="551"/>
    </location>
</feature>
<feature type="binding site" evidence="1">
    <location>
        <begin position="30"/>
        <end position="33"/>
    </location>
    <ligand>
        <name>ATP</name>
        <dbReference type="ChEBI" id="CHEBI:30616"/>
    </ligand>
</feature>
<feature type="binding site" evidence="1">
    <location>
        <position position="51"/>
    </location>
    <ligand>
        <name>ATP</name>
        <dbReference type="ChEBI" id="CHEBI:30616"/>
    </ligand>
</feature>
<feature type="binding site" evidence="1">
    <location>
        <begin position="87"/>
        <end position="91"/>
    </location>
    <ligand>
        <name>ATP</name>
        <dbReference type="ChEBI" id="CHEBI:30616"/>
    </ligand>
</feature>
<feature type="binding site" evidence="1">
    <location>
        <position position="415"/>
    </location>
    <ligand>
        <name>ATP</name>
        <dbReference type="ChEBI" id="CHEBI:30616"/>
    </ligand>
</feature>
<feature type="binding site" evidence="1">
    <location>
        <begin position="481"/>
        <end position="483"/>
    </location>
    <ligand>
        <name>ATP</name>
        <dbReference type="ChEBI" id="CHEBI:30616"/>
    </ligand>
</feature>
<feature type="binding site" evidence="1">
    <location>
        <position position="497"/>
    </location>
    <ligand>
        <name>ATP</name>
        <dbReference type="ChEBI" id="CHEBI:30616"/>
    </ligand>
</feature>
<gene>
    <name evidence="1" type="primary">groEL</name>
    <name evidence="1" type="synonym">groL</name>
    <name type="ordered locus">Mmc1_0295</name>
</gene>
<accession>A0L4C9</accession>
<evidence type="ECO:0000255" key="1">
    <source>
        <dbReference type="HAMAP-Rule" id="MF_00600"/>
    </source>
</evidence>
<protein>
    <recommendedName>
        <fullName evidence="1">Chaperonin GroEL</fullName>
        <ecNumber evidence="1">5.6.1.7</ecNumber>
    </recommendedName>
    <alternativeName>
        <fullName evidence="1">60 kDa chaperonin</fullName>
    </alternativeName>
    <alternativeName>
        <fullName evidence="1">Chaperonin-60</fullName>
        <shortName evidence="1">Cpn60</shortName>
    </alternativeName>
</protein>